<dbReference type="EMBL" id="AF321126">
    <property type="protein sequence ID" value="AAL23895.1"/>
    <property type="molecule type" value="mRNA"/>
</dbReference>
<dbReference type="EMBL" id="AK007869">
    <property type="protein sequence ID" value="BAB25320.1"/>
    <property type="molecule type" value="mRNA"/>
</dbReference>
<dbReference type="EMBL" id="AK011951">
    <property type="status" value="NOT_ANNOTATED_CDS"/>
    <property type="molecule type" value="mRNA"/>
</dbReference>
<dbReference type="EMBL" id="AK011973">
    <property type="protein sequence ID" value="BAB27948.1"/>
    <property type="molecule type" value="mRNA"/>
</dbReference>
<dbReference type="EMBL" id="AK014277">
    <property type="protein sequence ID" value="BAB29238.3"/>
    <property type="molecule type" value="mRNA"/>
</dbReference>
<dbReference type="EMBL" id="AK050636">
    <property type="protein sequence ID" value="BAC34356.1"/>
    <property type="molecule type" value="mRNA"/>
</dbReference>
<dbReference type="EMBL" id="AK081859">
    <property type="protein sequence ID" value="BAC38351.1"/>
    <property type="molecule type" value="mRNA"/>
</dbReference>
<dbReference type="EMBL" id="BC083071">
    <property type="protein sequence ID" value="AAH83071.1"/>
    <property type="molecule type" value="mRNA"/>
</dbReference>
<dbReference type="CCDS" id="CCDS29563.1"/>
<dbReference type="RefSeq" id="NP_080283.3">
    <property type="nucleotide sequence ID" value="NM_026007.4"/>
</dbReference>
<dbReference type="SMR" id="Q9D8N0"/>
<dbReference type="BioGRID" id="211986">
    <property type="interactions" value="68"/>
</dbReference>
<dbReference type="CORUM" id="Q9D8N0"/>
<dbReference type="DIP" id="DIP-32124N"/>
<dbReference type="FunCoup" id="Q9D8N0">
    <property type="interactions" value="3575"/>
</dbReference>
<dbReference type="IntAct" id="Q9D8N0">
    <property type="interactions" value="14"/>
</dbReference>
<dbReference type="STRING" id="10090.ENSMUSP00000093955"/>
<dbReference type="GlyGen" id="Q9D8N0">
    <property type="glycosylation" value="2 sites, 1 N-linked glycan (1 site), 1 O-linked glycan (1 site)"/>
</dbReference>
<dbReference type="iPTMnet" id="Q9D8N0"/>
<dbReference type="PhosphoSitePlus" id="Q9D8N0"/>
<dbReference type="SwissPalm" id="Q9D8N0"/>
<dbReference type="REPRODUCTION-2DPAGE" id="Q9D8N0"/>
<dbReference type="CPTAC" id="non-CPTAC-3788"/>
<dbReference type="jPOST" id="Q9D8N0"/>
<dbReference type="PaxDb" id="10090-ENSMUSP00000093955"/>
<dbReference type="ProteomicsDB" id="275906"/>
<dbReference type="Pumba" id="Q9D8N0"/>
<dbReference type="Antibodypedia" id="52234">
    <property type="antibodies" value="381 antibodies from 30 providers"/>
</dbReference>
<dbReference type="Ensembl" id="ENSMUST00000052248.8">
    <property type="protein sequence ID" value="ENSMUSP00000093955.5"/>
    <property type="gene ID" value="ENSMUSG00000071644.11"/>
</dbReference>
<dbReference type="GeneID" id="67160"/>
<dbReference type="KEGG" id="mmu:67160"/>
<dbReference type="UCSC" id="uc008goi.1">
    <property type="organism name" value="mouse"/>
</dbReference>
<dbReference type="AGR" id="MGI:1914410"/>
<dbReference type="CTD" id="1937"/>
<dbReference type="MGI" id="MGI:1914410">
    <property type="gene designation" value="Eef1g"/>
</dbReference>
<dbReference type="VEuPathDB" id="HostDB:ENSMUSG00000071644"/>
<dbReference type="eggNOG" id="KOG0867">
    <property type="taxonomic scope" value="Eukaryota"/>
</dbReference>
<dbReference type="eggNOG" id="KOG1627">
    <property type="taxonomic scope" value="Eukaryota"/>
</dbReference>
<dbReference type="GeneTree" id="ENSGT00390000007552"/>
<dbReference type="HOGENOM" id="CLU_011226_3_1_1"/>
<dbReference type="InParanoid" id="Q9D8N0"/>
<dbReference type="OMA" id="TQYFSWT"/>
<dbReference type="OrthoDB" id="249703at2759"/>
<dbReference type="PhylomeDB" id="Q9D8N0"/>
<dbReference type="TreeFam" id="TF314343"/>
<dbReference type="Reactome" id="R-MMU-156842">
    <property type="pathway name" value="Eukaryotic Translation Elongation"/>
</dbReference>
<dbReference type="BioGRID-ORCS" id="67160">
    <property type="hits" value="27 hits in 80 CRISPR screens"/>
</dbReference>
<dbReference type="CD-CODE" id="CE726F99">
    <property type="entry name" value="Postsynaptic density"/>
</dbReference>
<dbReference type="ChiTaRS" id="Eef1g">
    <property type="organism name" value="mouse"/>
</dbReference>
<dbReference type="PRO" id="PR:Q9D8N0"/>
<dbReference type="Proteomes" id="UP000000589">
    <property type="component" value="Chromosome 19"/>
</dbReference>
<dbReference type="RNAct" id="Q9D8N0">
    <property type="molecule type" value="protein"/>
</dbReference>
<dbReference type="Bgee" id="ENSMUSG00000071644">
    <property type="expression patterns" value="Expressed in cortical plate and 81 other cell types or tissues"/>
</dbReference>
<dbReference type="ExpressionAtlas" id="Q9D8N0">
    <property type="expression patterns" value="baseline and differential"/>
</dbReference>
<dbReference type="GO" id="GO:0005783">
    <property type="term" value="C:endoplasmic reticulum"/>
    <property type="evidence" value="ECO:0007669"/>
    <property type="project" value="Ensembl"/>
</dbReference>
<dbReference type="GO" id="GO:0003746">
    <property type="term" value="F:translation elongation factor activity"/>
    <property type="evidence" value="ECO:0007669"/>
    <property type="project" value="UniProtKB-KW"/>
</dbReference>
<dbReference type="GO" id="GO:0009615">
    <property type="term" value="P:response to virus"/>
    <property type="evidence" value="ECO:0007669"/>
    <property type="project" value="Ensembl"/>
</dbReference>
<dbReference type="CDD" id="cd03181">
    <property type="entry name" value="GST_C_EF1Bgamma_like"/>
    <property type="match status" value="1"/>
</dbReference>
<dbReference type="CDD" id="cd03044">
    <property type="entry name" value="GST_N_EF1Bgamma"/>
    <property type="match status" value="1"/>
</dbReference>
<dbReference type="FunFam" id="1.20.1050.10:FF:000021">
    <property type="entry name" value="Elongation factor 1-gamma"/>
    <property type="match status" value="1"/>
</dbReference>
<dbReference type="FunFam" id="3.40.30.10:FF:000088">
    <property type="entry name" value="Elongation factor 1-gamma"/>
    <property type="match status" value="1"/>
</dbReference>
<dbReference type="FunFam" id="3.30.70.1010:FF:000001">
    <property type="entry name" value="Elongation factor 1-gamma 1"/>
    <property type="match status" value="1"/>
</dbReference>
<dbReference type="Gene3D" id="1.20.1050.10">
    <property type="match status" value="1"/>
</dbReference>
<dbReference type="Gene3D" id="3.40.30.10">
    <property type="entry name" value="Glutaredoxin"/>
    <property type="match status" value="1"/>
</dbReference>
<dbReference type="Gene3D" id="3.30.70.1010">
    <property type="entry name" value="Translation elongation factor EF1B, gamma chain, conserved domain"/>
    <property type="match status" value="1"/>
</dbReference>
<dbReference type="InterPro" id="IPR050802">
    <property type="entry name" value="EF-GSTs"/>
</dbReference>
<dbReference type="InterPro" id="IPR001662">
    <property type="entry name" value="EF1B_G_C"/>
</dbReference>
<dbReference type="InterPro" id="IPR036433">
    <property type="entry name" value="EF1B_G_C_sf"/>
</dbReference>
<dbReference type="InterPro" id="IPR010987">
    <property type="entry name" value="Glutathione-S-Trfase_C-like"/>
</dbReference>
<dbReference type="InterPro" id="IPR036282">
    <property type="entry name" value="Glutathione-S-Trfase_C_sf"/>
</dbReference>
<dbReference type="InterPro" id="IPR040079">
    <property type="entry name" value="Glutathione_S-Trfase"/>
</dbReference>
<dbReference type="InterPro" id="IPR004045">
    <property type="entry name" value="Glutathione_S-Trfase_N"/>
</dbReference>
<dbReference type="InterPro" id="IPR004046">
    <property type="entry name" value="GST_C"/>
</dbReference>
<dbReference type="InterPro" id="IPR036249">
    <property type="entry name" value="Thioredoxin-like_sf"/>
</dbReference>
<dbReference type="PANTHER" id="PTHR43986">
    <property type="entry name" value="ELONGATION FACTOR 1-GAMMA"/>
    <property type="match status" value="1"/>
</dbReference>
<dbReference type="PANTHER" id="PTHR43986:SF1">
    <property type="entry name" value="ELONGATION FACTOR 1-GAMMA"/>
    <property type="match status" value="1"/>
</dbReference>
<dbReference type="Pfam" id="PF00647">
    <property type="entry name" value="EF1G"/>
    <property type="match status" value="1"/>
</dbReference>
<dbReference type="Pfam" id="PF00043">
    <property type="entry name" value="GST_C"/>
    <property type="match status" value="1"/>
</dbReference>
<dbReference type="Pfam" id="PF02798">
    <property type="entry name" value="GST_N"/>
    <property type="match status" value="1"/>
</dbReference>
<dbReference type="SFLD" id="SFLDS00019">
    <property type="entry name" value="Glutathione_Transferase_(cytos"/>
    <property type="match status" value="1"/>
</dbReference>
<dbReference type="SFLD" id="SFLDG00358">
    <property type="entry name" value="Main_(cytGST)"/>
    <property type="match status" value="1"/>
</dbReference>
<dbReference type="SMART" id="SM01183">
    <property type="entry name" value="EF1G"/>
    <property type="match status" value="1"/>
</dbReference>
<dbReference type="SUPFAM" id="SSF89942">
    <property type="entry name" value="eEF1-gamma domain"/>
    <property type="match status" value="1"/>
</dbReference>
<dbReference type="SUPFAM" id="SSF47616">
    <property type="entry name" value="GST C-terminal domain-like"/>
    <property type="match status" value="1"/>
</dbReference>
<dbReference type="SUPFAM" id="SSF52833">
    <property type="entry name" value="Thioredoxin-like"/>
    <property type="match status" value="1"/>
</dbReference>
<dbReference type="PROSITE" id="PS50040">
    <property type="entry name" value="EF1G_C"/>
    <property type="match status" value="1"/>
</dbReference>
<dbReference type="PROSITE" id="PS50405">
    <property type="entry name" value="GST_CTER"/>
    <property type="match status" value="1"/>
</dbReference>
<dbReference type="PROSITE" id="PS50404">
    <property type="entry name" value="GST_NTER"/>
    <property type="match status" value="1"/>
</dbReference>
<protein>
    <recommendedName>
        <fullName>Elongation factor 1-gamma</fullName>
        <shortName>EF-1-gamma</shortName>
    </recommendedName>
    <alternativeName>
        <fullName>eEF-1B gamma</fullName>
    </alternativeName>
</protein>
<proteinExistence type="evidence at protein level"/>
<gene>
    <name type="primary">Eef1g</name>
</gene>
<feature type="initiator methionine" description="Removed" evidence="2">
    <location>
        <position position="1"/>
    </location>
</feature>
<feature type="chain" id="PRO_0000208814" description="Elongation factor 1-gamma">
    <location>
        <begin position="2"/>
        <end position="437"/>
    </location>
</feature>
<feature type="domain" description="GST N-terminal">
    <location>
        <begin position="2"/>
        <end position="87"/>
    </location>
</feature>
<feature type="domain" description="GST C-terminal">
    <location>
        <begin position="88"/>
        <end position="216"/>
    </location>
</feature>
<feature type="domain" description="EF-1-gamma C-terminal" evidence="3">
    <location>
        <begin position="276"/>
        <end position="437"/>
    </location>
</feature>
<feature type="region of interest" description="Disordered" evidence="4">
    <location>
        <begin position="221"/>
        <end position="268"/>
    </location>
</feature>
<feature type="compositionally biased region" description="Basic and acidic residues" evidence="4">
    <location>
        <begin position="221"/>
        <end position="254"/>
    </location>
</feature>
<feature type="modified residue" description="N-acetylalanine" evidence="2">
    <location>
        <position position="2"/>
    </location>
</feature>
<feature type="modified residue" description="N6-acetyllysine" evidence="6">
    <location>
        <position position="147"/>
    </location>
</feature>
<feature type="modified residue" description="N6-acetyllysine" evidence="6">
    <location>
        <position position="212"/>
    </location>
</feature>
<feature type="modified residue" description="N6-acetyllysine" evidence="6">
    <location>
        <position position="401"/>
    </location>
</feature>
<feature type="modified residue" description="N6-acetyllysine; alternate" evidence="6">
    <location>
        <position position="434"/>
    </location>
</feature>
<feature type="modified residue" description="N6-malonyllysine; alternate" evidence="1">
    <location>
        <position position="434"/>
    </location>
</feature>
<feature type="cross-link" description="Glycyl lysine isopeptide (Lys-Gly) (interchain with G-Cter in SUMO1)" evidence="2">
    <location>
        <position position="253"/>
    </location>
</feature>
<feature type="cross-link" description="Glycyl lysine isopeptide (Lys-Gly) (interchain with G-Cter in SUMO2)" evidence="2">
    <location>
        <position position="285"/>
    </location>
</feature>
<feature type="sequence conflict" description="In Ref. 2; BAB29238." evidence="5" ref="2">
    <original>G</original>
    <variation>E</variation>
    <location>
        <position position="4"/>
    </location>
</feature>
<feature type="sequence conflict" description="In Ref. 1; AAL23895." evidence="5" ref="1">
    <original>K</original>
    <variation>R</variation>
    <location>
        <position position="173"/>
    </location>
</feature>
<feature type="sequence conflict" description="In Ref. 2; BAB27948." evidence="5" ref="2">
    <original>K</original>
    <variation>N</variation>
    <location>
        <position position="227"/>
    </location>
</feature>
<feature type="sequence conflict" description="In Ref. 1; AAL23895." evidence="5" ref="1">
    <original>N</original>
    <variation>T</variation>
    <location>
        <position position="340"/>
    </location>
</feature>
<feature type="sequence conflict" description="In Ref. 1; AAL23895." evidence="5" ref="1">
    <original>V</original>
    <variation>G</variation>
    <location>
        <position position="413"/>
    </location>
</feature>
<sequence length="437" mass="50061">MAAGTLYTYPENWRAFKALIAAQYSGAQVRVLSAPPHFHFGQTNRTPEFLRKFPAGKVPAFEGDDGFCVFESNAIAYYVSNEELRGSTPEAAAQVVQWVSFADSDIVPPASTWVFPTLGIMHHNKQATENAKEEVKRILGLLDTHLKTRTFLVGERVTLADITVVCTLLWLYKQVLEPSFRQAFPNTNRWFLTCINQPQFRAILGEVKLCEKMAQFDAKKFAESQPKKDTPRKEKGSREEKQKPQAERKEEKKAAAPAPEEEMDECEQALAAEPKAKDPFAHLPKSTFVLDEFKRKYSNEDTLSVALPYFWEHFDKDGWSLWYAEYRFPEELTQTFMSCNLITGMFQRLDKLRKNAFASVILFGTNNSSSISGVWVFRGQELAFPLSPDWQVDYESYTWRKLDPGSEETQTLVREYFSWEGTFQHVGKAVNQGKIFK</sequence>
<comment type="function">
    <text evidence="1">Probably plays a role in anchoring the complex to other cellular components.</text>
</comment>
<comment type="subunit">
    <text evidence="1">EF-1 is composed of four subunits: alpha, beta, delta, and gamma.</text>
</comment>
<organism>
    <name type="scientific">Mus musculus</name>
    <name type="common">Mouse</name>
    <dbReference type="NCBI Taxonomy" id="10090"/>
    <lineage>
        <taxon>Eukaryota</taxon>
        <taxon>Metazoa</taxon>
        <taxon>Chordata</taxon>
        <taxon>Craniata</taxon>
        <taxon>Vertebrata</taxon>
        <taxon>Euteleostomi</taxon>
        <taxon>Mammalia</taxon>
        <taxon>Eutheria</taxon>
        <taxon>Euarchontoglires</taxon>
        <taxon>Glires</taxon>
        <taxon>Rodentia</taxon>
        <taxon>Myomorpha</taxon>
        <taxon>Muroidea</taxon>
        <taxon>Muridae</taxon>
        <taxon>Murinae</taxon>
        <taxon>Mus</taxon>
        <taxon>Mus</taxon>
    </lineage>
</organism>
<accession>Q9D8N0</accession>
<accession>Q920C5</accession>
<accession>Q9CRT5</accession>
<accession>Q9CSU3</accession>
<accession>Q9D004</accession>
<keyword id="KW-0007">Acetylation</keyword>
<keyword id="KW-0903">Direct protein sequencing</keyword>
<keyword id="KW-0251">Elongation factor</keyword>
<keyword id="KW-1017">Isopeptide bond</keyword>
<keyword id="KW-0648">Protein biosynthesis</keyword>
<keyword id="KW-1185">Reference proteome</keyword>
<keyword id="KW-0832">Ubl conjugation</keyword>
<evidence type="ECO:0000250" key="1"/>
<evidence type="ECO:0000250" key="2">
    <source>
        <dbReference type="UniProtKB" id="P26641"/>
    </source>
</evidence>
<evidence type="ECO:0000255" key="3">
    <source>
        <dbReference type="PROSITE-ProRule" id="PRU00519"/>
    </source>
</evidence>
<evidence type="ECO:0000256" key="4">
    <source>
        <dbReference type="SAM" id="MobiDB-lite"/>
    </source>
</evidence>
<evidence type="ECO:0000305" key="5"/>
<evidence type="ECO:0007744" key="6">
    <source>
    </source>
</evidence>
<name>EF1G_MOUSE</name>
<reference key="1">
    <citation type="submission" date="2000-11" db="EMBL/GenBank/DDBJ databases">
        <title>Mouse elongation factor-like protein, mRNA sequence.</title>
        <authorList>
            <person name="Lee Y."/>
            <person name="Lu X."/>
            <person name="He W."/>
        </authorList>
    </citation>
    <scope>NUCLEOTIDE SEQUENCE [MRNA]</scope>
    <source>
        <strain>BALB/cJ</strain>
        <tissue>Thymus</tissue>
    </source>
</reference>
<reference key="2">
    <citation type="journal article" date="2005" name="Science">
        <title>The transcriptional landscape of the mammalian genome.</title>
        <authorList>
            <person name="Carninci P."/>
            <person name="Kasukawa T."/>
            <person name="Katayama S."/>
            <person name="Gough J."/>
            <person name="Frith M.C."/>
            <person name="Maeda N."/>
            <person name="Oyama R."/>
            <person name="Ravasi T."/>
            <person name="Lenhard B."/>
            <person name="Wells C."/>
            <person name="Kodzius R."/>
            <person name="Shimokawa K."/>
            <person name="Bajic V.B."/>
            <person name="Brenner S.E."/>
            <person name="Batalov S."/>
            <person name="Forrest A.R."/>
            <person name="Zavolan M."/>
            <person name="Davis M.J."/>
            <person name="Wilming L.G."/>
            <person name="Aidinis V."/>
            <person name="Allen J.E."/>
            <person name="Ambesi-Impiombato A."/>
            <person name="Apweiler R."/>
            <person name="Aturaliya R.N."/>
            <person name="Bailey T.L."/>
            <person name="Bansal M."/>
            <person name="Baxter L."/>
            <person name="Beisel K.W."/>
            <person name="Bersano T."/>
            <person name="Bono H."/>
            <person name="Chalk A.M."/>
            <person name="Chiu K.P."/>
            <person name="Choudhary V."/>
            <person name="Christoffels A."/>
            <person name="Clutterbuck D.R."/>
            <person name="Crowe M.L."/>
            <person name="Dalla E."/>
            <person name="Dalrymple B.P."/>
            <person name="de Bono B."/>
            <person name="Della Gatta G."/>
            <person name="di Bernardo D."/>
            <person name="Down T."/>
            <person name="Engstrom P."/>
            <person name="Fagiolini M."/>
            <person name="Faulkner G."/>
            <person name="Fletcher C.F."/>
            <person name="Fukushima T."/>
            <person name="Furuno M."/>
            <person name="Futaki S."/>
            <person name="Gariboldi M."/>
            <person name="Georgii-Hemming P."/>
            <person name="Gingeras T.R."/>
            <person name="Gojobori T."/>
            <person name="Green R.E."/>
            <person name="Gustincich S."/>
            <person name="Harbers M."/>
            <person name="Hayashi Y."/>
            <person name="Hensch T.K."/>
            <person name="Hirokawa N."/>
            <person name="Hill D."/>
            <person name="Huminiecki L."/>
            <person name="Iacono M."/>
            <person name="Ikeo K."/>
            <person name="Iwama A."/>
            <person name="Ishikawa T."/>
            <person name="Jakt M."/>
            <person name="Kanapin A."/>
            <person name="Katoh M."/>
            <person name="Kawasawa Y."/>
            <person name="Kelso J."/>
            <person name="Kitamura H."/>
            <person name="Kitano H."/>
            <person name="Kollias G."/>
            <person name="Krishnan S.P."/>
            <person name="Kruger A."/>
            <person name="Kummerfeld S.K."/>
            <person name="Kurochkin I.V."/>
            <person name="Lareau L.F."/>
            <person name="Lazarevic D."/>
            <person name="Lipovich L."/>
            <person name="Liu J."/>
            <person name="Liuni S."/>
            <person name="McWilliam S."/>
            <person name="Madan Babu M."/>
            <person name="Madera M."/>
            <person name="Marchionni L."/>
            <person name="Matsuda H."/>
            <person name="Matsuzawa S."/>
            <person name="Miki H."/>
            <person name="Mignone F."/>
            <person name="Miyake S."/>
            <person name="Morris K."/>
            <person name="Mottagui-Tabar S."/>
            <person name="Mulder N."/>
            <person name="Nakano N."/>
            <person name="Nakauchi H."/>
            <person name="Ng P."/>
            <person name="Nilsson R."/>
            <person name="Nishiguchi S."/>
            <person name="Nishikawa S."/>
            <person name="Nori F."/>
            <person name="Ohara O."/>
            <person name="Okazaki Y."/>
            <person name="Orlando V."/>
            <person name="Pang K.C."/>
            <person name="Pavan W.J."/>
            <person name="Pavesi G."/>
            <person name="Pesole G."/>
            <person name="Petrovsky N."/>
            <person name="Piazza S."/>
            <person name="Reed J."/>
            <person name="Reid J.F."/>
            <person name="Ring B.Z."/>
            <person name="Ringwald M."/>
            <person name="Rost B."/>
            <person name="Ruan Y."/>
            <person name="Salzberg S.L."/>
            <person name="Sandelin A."/>
            <person name="Schneider C."/>
            <person name="Schoenbach C."/>
            <person name="Sekiguchi K."/>
            <person name="Semple C.A."/>
            <person name="Seno S."/>
            <person name="Sessa L."/>
            <person name="Sheng Y."/>
            <person name="Shibata Y."/>
            <person name="Shimada H."/>
            <person name="Shimada K."/>
            <person name="Silva D."/>
            <person name="Sinclair B."/>
            <person name="Sperling S."/>
            <person name="Stupka E."/>
            <person name="Sugiura K."/>
            <person name="Sultana R."/>
            <person name="Takenaka Y."/>
            <person name="Taki K."/>
            <person name="Tammoja K."/>
            <person name="Tan S.L."/>
            <person name="Tang S."/>
            <person name="Taylor M.S."/>
            <person name="Tegner J."/>
            <person name="Teichmann S.A."/>
            <person name="Ueda H.R."/>
            <person name="van Nimwegen E."/>
            <person name="Verardo R."/>
            <person name="Wei C.L."/>
            <person name="Yagi K."/>
            <person name="Yamanishi H."/>
            <person name="Zabarovsky E."/>
            <person name="Zhu S."/>
            <person name="Zimmer A."/>
            <person name="Hide W."/>
            <person name="Bult C."/>
            <person name="Grimmond S.M."/>
            <person name="Teasdale R.D."/>
            <person name="Liu E.T."/>
            <person name="Brusic V."/>
            <person name="Quackenbush J."/>
            <person name="Wahlestedt C."/>
            <person name="Mattick J.S."/>
            <person name="Hume D.A."/>
            <person name="Kai C."/>
            <person name="Sasaki D."/>
            <person name="Tomaru Y."/>
            <person name="Fukuda S."/>
            <person name="Kanamori-Katayama M."/>
            <person name="Suzuki M."/>
            <person name="Aoki J."/>
            <person name="Arakawa T."/>
            <person name="Iida J."/>
            <person name="Imamura K."/>
            <person name="Itoh M."/>
            <person name="Kato T."/>
            <person name="Kawaji H."/>
            <person name="Kawagashira N."/>
            <person name="Kawashima T."/>
            <person name="Kojima M."/>
            <person name="Kondo S."/>
            <person name="Konno H."/>
            <person name="Nakano K."/>
            <person name="Ninomiya N."/>
            <person name="Nishio T."/>
            <person name="Okada M."/>
            <person name="Plessy C."/>
            <person name="Shibata K."/>
            <person name="Shiraki T."/>
            <person name="Suzuki S."/>
            <person name="Tagami M."/>
            <person name="Waki K."/>
            <person name="Watahiki A."/>
            <person name="Okamura-Oho Y."/>
            <person name="Suzuki H."/>
            <person name="Kawai J."/>
            <person name="Hayashizaki Y."/>
        </authorList>
    </citation>
    <scope>NUCLEOTIDE SEQUENCE [LARGE SCALE MRNA]</scope>
    <source>
        <strain>C57BL/6J</strain>
        <tissue>Embryo</tissue>
        <tissue>Embryonic head</tissue>
        <tissue>Pancreas</tissue>
        <tissue>Thymus</tissue>
    </source>
</reference>
<reference key="3">
    <citation type="journal article" date="2004" name="Genome Res.">
        <title>The status, quality, and expansion of the NIH full-length cDNA project: the Mammalian Gene Collection (MGC).</title>
        <authorList>
            <consortium name="The MGC Project Team"/>
        </authorList>
    </citation>
    <scope>NUCLEOTIDE SEQUENCE [LARGE SCALE MRNA]</scope>
    <source>
        <strain>C57BL/6J</strain>
        <tissue>Embryo</tissue>
    </source>
</reference>
<reference key="4">
    <citation type="submission" date="2007-04" db="UniProtKB">
        <authorList>
            <person name="Lubec G."/>
            <person name="Kang S.U."/>
        </authorList>
    </citation>
    <scope>PROTEIN SEQUENCE OF 234-241</scope>
    <scope>IDENTIFICATION BY MASS SPECTROMETRY</scope>
    <source>
        <strain>C57BL/6J</strain>
        <tissue>Brain</tissue>
    </source>
</reference>
<reference key="5">
    <citation type="journal article" date="2010" name="Cell">
        <title>A tissue-specific atlas of mouse protein phosphorylation and expression.</title>
        <authorList>
            <person name="Huttlin E.L."/>
            <person name="Jedrychowski M.P."/>
            <person name="Elias J.E."/>
            <person name="Goswami T."/>
            <person name="Rad R."/>
            <person name="Beausoleil S.A."/>
            <person name="Villen J."/>
            <person name="Haas W."/>
            <person name="Sowa M.E."/>
            <person name="Gygi S.P."/>
        </authorList>
    </citation>
    <scope>IDENTIFICATION BY MASS SPECTROMETRY [LARGE SCALE ANALYSIS]</scope>
    <source>
        <tissue>Brain</tissue>
        <tissue>Brown adipose tissue</tissue>
        <tissue>Heart</tissue>
        <tissue>Kidney</tissue>
        <tissue>Liver</tissue>
        <tissue>Lung</tissue>
        <tissue>Pancreas</tissue>
        <tissue>Spleen</tissue>
        <tissue>Testis</tissue>
    </source>
</reference>
<reference key="6">
    <citation type="journal article" date="2013" name="Mol. Cell">
        <title>SIRT5-mediated lysine desuccinylation impacts diverse metabolic pathways.</title>
        <authorList>
            <person name="Park J."/>
            <person name="Chen Y."/>
            <person name="Tishkoff D.X."/>
            <person name="Peng C."/>
            <person name="Tan M."/>
            <person name="Dai L."/>
            <person name="Xie Z."/>
            <person name="Zhang Y."/>
            <person name="Zwaans B.M."/>
            <person name="Skinner M.E."/>
            <person name="Lombard D.B."/>
            <person name="Zhao Y."/>
        </authorList>
    </citation>
    <scope>ACETYLATION [LARGE SCALE ANALYSIS] AT LYS-147; LYS-212; LYS-401 AND LYS-434</scope>
    <scope>IDENTIFICATION BY MASS SPECTROMETRY [LARGE SCALE ANALYSIS]</scope>
    <source>
        <tissue>Embryonic fibroblast</tissue>
    </source>
</reference>